<keyword id="KW-0030">Aminoacyl-tRNA synthetase</keyword>
<keyword id="KW-0067">ATP-binding</keyword>
<keyword id="KW-0963">Cytoplasm</keyword>
<keyword id="KW-0436">Ligase</keyword>
<keyword id="KW-0460">Magnesium</keyword>
<keyword id="KW-0479">Metal-binding</keyword>
<keyword id="KW-0547">Nucleotide-binding</keyword>
<keyword id="KW-0648">Protein biosynthesis</keyword>
<keyword id="KW-0694">RNA-binding</keyword>
<keyword id="KW-0820">tRNA-binding</keyword>
<protein>
    <recommendedName>
        <fullName>Phenylalanine--tRNA ligase beta subunit</fullName>
        <ecNumber>6.1.1.20</ecNumber>
    </recommendedName>
    <alternativeName>
        <fullName>Phenylalanyl-tRNA synthetase beta subunit</fullName>
        <shortName>PheRS</shortName>
    </alternativeName>
</protein>
<dbReference type="EC" id="6.1.1.20"/>
<dbReference type="EMBL" id="AE002160">
    <property type="protein sequence ID" value="AAF39564.1"/>
    <property type="molecule type" value="Genomic_DNA"/>
</dbReference>
<dbReference type="PIR" id="D81668">
    <property type="entry name" value="D81668"/>
</dbReference>
<dbReference type="RefSeq" id="WP_010231469.1">
    <property type="nucleotide sequence ID" value="NZ_CP063055.1"/>
</dbReference>
<dbReference type="SMR" id="Q9PJR8"/>
<dbReference type="GeneID" id="1246125"/>
<dbReference type="KEGG" id="cmu:TC_0760"/>
<dbReference type="eggNOG" id="COG0072">
    <property type="taxonomic scope" value="Bacteria"/>
</dbReference>
<dbReference type="eggNOG" id="COG0073">
    <property type="taxonomic scope" value="Bacteria"/>
</dbReference>
<dbReference type="HOGENOM" id="CLU_016891_0_0_0"/>
<dbReference type="OrthoDB" id="9805455at2"/>
<dbReference type="Proteomes" id="UP000000800">
    <property type="component" value="Chromosome"/>
</dbReference>
<dbReference type="GO" id="GO:0009328">
    <property type="term" value="C:phenylalanine-tRNA ligase complex"/>
    <property type="evidence" value="ECO:0007669"/>
    <property type="project" value="TreeGrafter"/>
</dbReference>
<dbReference type="GO" id="GO:0005524">
    <property type="term" value="F:ATP binding"/>
    <property type="evidence" value="ECO:0007669"/>
    <property type="project" value="UniProtKB-UniRule"/>
</dbReference>
<dbReference type="GO" id="GO:0000287">
    <property type="term" value="F:magnesium ion binding"/>
    <property type="evidence" value="ECO:0007669"/>
    <property type="project" value="UniProtKB-UniRule"/>
</dbReference>
<dbReference type="GO" id="GO:0004826">
    <property type="term" value="F:phenylalanine-tRNA ligase activity"/>
    <property type="evidence" value="ECO:0007669"/>
    <property type="project" value="UniProtKB-UniRule"/>
</dbReference>
<dbReference type="GO" id="GO:0000049">
    <property type="term" value="F:tRNA binding"/>
    <property type="evidence" value="ECO:0007669"/>
    <property type="project" value="UniProtKB-KW"/>
</dbReference>
<dbReference type="GO" id="GO:0006432">
    <property type="term" value="P:phenylalanyl-tRNA aminoacylation"/>
    <property type="evidence" value="ECO:0007669"/>
    <property type="project" value="UniProtKB-UniRule"/>
</dbReference>
<dbReference type="CDD" id="cd00769">
    <property type="entry name" value="PheRS_beta_core"/>
    <property type="match status" value="1"/>
</dbReference>
<dbReference type="CDD" id="cd02796">
    <property type="entry name" value="tRNA_bind_bactPheRS"/>
    <property type="match status" value="1"/>
</dbReference>
<dbReference type="FunFam" id="2.40.50.140:FF:000045">
    <property type="entry name" value="Phenylalanine--tRNA ligase beta subunit"/>
    <property type="match status" value="1"/>
</dbReference>
<dbReference type="Gene3D" id="3.30.56.10">
    <property type="match status" value="2"/>
</dbReference>
<dbReference type="Gene3D" id="3.30.930.10">
    <property type="entry name" value="Bira Bifunctional Protein, Domain 2"/>
    <property type="match status" value="1"/>
</dbReference>
<dbReference type="Gene3D" id="3.30.70.380">
    <property type="entry name" value="Ferrodoxin-fold anticodon-binding domain"/>
    <property type="match status" value="1"/>
</dbReference>
<dbReference type="Gene3D" id="2.40.50.140">
    <property type="entry name" value="Nucleic acid-binding proteins"/>
    <property type="match status" value="1"/>
</dbReference>
<dbReference type="Gene3D" id="3.50.40.10">
    <property type="entry name" value="Phenylalanyl-trna Synthetase, Chain B, domain 3"/>
    <property type="match status" value="1"/>
</dbReference>
<dbReference type="HAMAP" id="MF_00283">
    <property type="entry name" value="Phe_tRNA_synth_beta1"/>
    <property type="match status" value="1"/>
</dbReference>
<dbReference type="InterPro" id="IPR045864">
    <property type="entry name" value="aa-tRNA-synth_II/BPL/LPL"/>
</dbReference>
<dbReference type="InterPro" id="IPR005146">
    <property type="entry name" value="B3/B4_tRNA-bd"/>
</dbReference>
<dbReference type="InterPro" id="IPR009061">
    <property type="entry name" value="DNA-bd_dom_put_sf"/>
</dbReference>
<dbReference type="InterPro" id="IPR005121">
    <property type="entry name" value="Fdx_antiC-bd"/>
</dbReference>
<dbReference type="InterPro" id="IPR036690">
    <property type="entry name" value="Fdx_antiC-bd_sf"/>
</dbReference>
<dbReference type="InterPro" id="IPR012340">
    <property type="entry name" value="NA-bd_OB-fold"/>
</dbReference>
<dbReference type="InterPro" id="IPR045060">
    <property type="entry name" value="Phe-tRNA-ligase_IIc_bsu"/>
</dbReference>
<dbReference type="InterPro" id="IPR004532">
    <property type="entry name" value="Phe-tRNA-ligase_IIc_bsu_bact"/>
</dbReference>
<dbReference type="InterPro" id="IPR020825">
    <property type="entry name" value="Phe-tRNA_synthase-like_B3/B4"/>
</dbReference>
<dbReference type="InterPro" id="IPR041616">
    <property type="entry name" value="PheRS_beta_core"/>
</dbReference>
<dbReference type="InterPro" id="IPR002547">
    <property type="entry name" value="tRNA-bd_dom"/>
</dbReference>
<dbReference type="InterPro" id="IPR033714">
    <property type="entry name" value="tRNA_bind_bactPheRS"/>
</dbReference>
<dbReference type="InterPro" id="IPR005147">
    <property type="entry name" value="tRNA_synthase_B5-dom"/>
</dbReference>
<dbReference type="NCBIfam" id="TIGR00472">
    <property type="entry name" value="pheT_bact"/>
    <property type="match status" value="1"/>
</dbReference>
<dbReference type="PANTHER" id="PTHR10947:SF0">
    <property type="entry name" value="PHENYLALANINE--TRNA LIGASE BETA SUBUNIT"/>
    <property type="match status" value="1"/>
</dbReference>
<dbReference type="PANTHER" id="PTHR10947">
    <property type="entry name" value="PHENYLALANYL-TRNA SYNTHETASE BETA CHAIN AND LEUCINE-RICH REPEAT-CONTAINING PROTEIN 47"/>
    <property type="match status" value="1"/>
</dbReference>
<dbReference type="Pfam" id="PF03483">
    <property type="entry name" value="B3_4"/>
    <property type="match status" value="1"/>
</dbReference>
<dbReference type="Pfam" id="PF03484">
    <property type="entry name" value="B5"/>
    <property type="match status" value="1"/>
</dbReference>
<dbReference type="Pfam" id="PF03147">
    <property type="entry name" value="FDX-ACB"/>
    <property type="match status" value="1"/>
</dbReference>
<dbReference type="Pfam" id="PF01588">
    <property type="entry name" value="tRNA_bind"/>
    <property type="match status" value="1"/>
</dbReference>
<dbReference type="Pfam" id="PF17759">
    <property type="entry name" value="tRNA_synthFbeta"/>
    <property type="match status" value="1"/>
</dbReference>
<dbReference type="SMART" id="SM00873">
    <property type="entry name" value="B3_4"/>
    <property type="match status" value="1"/>
</dbReference>
<dbReference type="SMART" id="SM00874">
    <property type="entry name" value="B5"/>
    <property type="match status" value="1"/>
</dbReference>
<dbReference type="SMART" id="SM00896">
    <property type="entry name" value="FDX-ACB"/>
    <property type="match status" value="1"/>
</dbReference>
<dbReference type="SUPFAM" id="SSF54991">
    <property type="entry name" value="Anticodon-binding domain of PheRS"/>
    <property type="match status" value="1"/>
</dbReference>
<dbReference type="SUPFAM" id="SSF55681">
    <property type="entry name" value="Class II aaRS and biotin synthetases"/>
    <property type="match status" value="1"/>
</dbReference>
<dbReference type="SUPFAM" id="SSF50249">
    <property type="entry name" value="Nucleic acid-binding proteins"/>
    <property type="match status" value="1"/>
</dbReference>
<dbReference type="SUPFAM" id="SSF56037">
    <property type="entry name" value="PheT/TilS domain"/>
    <property type="match status" value="1"/>
</dbReference>
<dbReference type="SUPFAM" id="SSF46955">
    <property type="entry name" value="Putative DNA-binding domain"/>
    <property type="match status" value="1"/>
</dbReference>
<dbReference type="PROSITE" id="PS51483">
    <property type="entry name" value="B5"/>
    <property type="match status" value="1"/>
</dbReference>
<dbReference type="PROSITE" id="PS51447">
    <property type="entry name" value="FDX_ACB"/>
    <property type="match status" value="1"/>
</dbReference>
<dbReference type="PROSITE" id="PS50886">
    <property type="entry name" value="TRBD"/>
    <property type="match status" value="1"/>
</dbReference>
<proteinExistence type="inferred from homology"/>
<gene>
    <name type="primary">pheT</name>
    <name type="ordered locus">TC_0760</name>
</gene>
<sequence length="790" mass="87617">MLTPIPLLQRFFSSPLSIKEILQACDRIGIEAECSNVFPDSLNTVVTGKVLSTSPHPDAERLSVAIVFDGKEERQIICGAPNCRAGIIVPVALPGAKIRNALGEVTTIKKSKIRGLESLGMCCGADELGFPHLQTGERGIFEFPENTPLGESACLLLAGASLECSLTPNLGHCASLLGLAREISFLSDTSLTIPEEFSFSPLPQESHSCDTHNLEASPVFYSVKISGLSWKQSPEDLQASLIALGQKPLNAIVDITNYVMLSLGQPLHAYDSQAVDQKSLHATTVRSPQQLTLLNKETYTLPEGALVVADQHNILGLAGVMGSAASAYSESTTEIILEAAYFLPQAVRKYQRTIQLHTEAAYRFTRGIDPQGVLPALYAAIHMIRALFPEAQISPIQKIGEYKSDPLSLNIRPKTLKRLLDLSLSPSEIAEKLSPLGFQTIAEESSVRVEVPLYRHDIQEETDLVEEICRTTPFVQKTQKILPTYTPIYALKRSLSTFLADSGLQQFFTCSLLDSEIAALSLQESSLIPVQNSSLKLRDSLLSGMLKSAATNLNRQAPYVYAFEIGNVYSKEHNQYREEEHIAILLTRQVMDDSWHVKTPLSFYTIKSWVEKLLCHAGVSIEDFVLQASQHPNFHPYRQAALYHKKQLLGVFGTLHPQLCKKSQIKHDVVFAELSLNVLLSLKKKTEPHYVPYPIYPSSSRDITITIDKDLPADLVRRELLSFESKWLESVHIVSVYQGKDVTSQSKNISLRLVFRDHERTLSGQEIEKEYERLTTLLDKNLANIGKGNS</sequence>
<evidence type="ECO:0000250" key="1"/>
<evidence type="ECO:0000305" key="2"/>
<organism>
    <name type="scientific">Chlamydia muridarum (strain MoPn / Nigg)</name>
    <dbReference type="NCBI Taxonomy" id="243161"/>
    <lineage>
        <taxon>Bacteria</taxon>
        <taxon>Pseudomonadati</taxon>
        <taxon>Chlamydiota</taxon>
        <taxon>Chlamydiia</taxon>
        <taxon>Chlamydiales</taxon>
        <taxon>Chlamydiaceae</taxon>
        <taxon>Chlamydia/Chlamydophila group</taxon>
        <taxon>Chlamydia</taxon>
    </lineage>
</organism>
<comment type="catalytic activity">
    <reaction>
        <text>tRNA(Phe) + L-phenylalanine + ATP = L-phenylalanyl-tRNA(Phe) + AMP + diphosphate + H(+)</text>
        <dbReference type="Rhea" id="RHEA:19413"/>
        <dbReference type="Rhea" id="RHEA-COMP:9668"/>
        <dbReference type="Rhea" id="RHEA-COMP:9699"/>
        <dbReference type="ChEBI" id="CHEBI:15378"/>
        <dbReference type="ChEBI" id="CHEBI:30616"/>
        <dbReference type="ChEBI" id="CHEBI:33019"/>
        <dbReference type="ChEBI" id="CHEBI:58095"/>
        <dbReference type="ChEBI" id="CHEBI:78442"/>
        <dbReference type="ChEBI" id="CHEBI:78531"/>
        <dbReference type="ChEBI" id="CHEBI:456215"/>
        <dbReference type="EC" id="6.1.1.20"/>
    </reaction>
</comment>
<comment type="cofactor">
    <cofactor evidence="1">
        <name>Mg(2+)</name>
        <dbReference type="ChEBI" id="CHEBI:18420"/>
    </cofactor>
    <text evidence="1">Binds 2 magnesium ions per tetramer.</text>
</comment>
<comment type="subunit">
    <text evidence="1">Tetramer of two alpha and two beta subunits.</text>
</comment>
<comment type="subcellular location">
    <subcellularLocation>
        <location evidence="1">Cytoplasm</location>
    </subcellularLocation>
</comment>
<comment type="similarity">
    <text evidence="2">Belongs to the phenylalanyl-tRNA synthetase beta subunit family. Type 1 subfamily.</text>
</comment>
<feature type="chain" id="PRO_0000126865" description="Phenylalanine--tRNA ligase beta subunit">
    <location>
        <begin position="1"/>
        <end position="790"/>
    </location>
</feature>
<feature type="domain" description="tRNA-binding">
    <location>
        <begin position="39"/>
        <end position="154"/>
    </location>
</feature>
<feature type="domain" description="B5">
    <location>
        <begin position="404"/>
        <end position="483"/>
    </location>
</feature>
<feature type="domain" description="FDX-ACB">
    <location>
        <begin position="694"/>
        <end position="790"/>
    </location>
</feature>
<feature type="binding site" evidence="1">
    <location>
        <position position="457"/>
    </location>
    <ligand>
        <name>Mg(2+)</name>
        <dbReference type="ChEBI" id="CHEBI:18420"/>
        <note>shared with alpha subunit</note>
    </ligand>
</feature>
<feature type="binding site" evidence="1">
    <location>
        <position position="463"/>
    </location>
    <ligand>
        <name>Mg(2+)</name>
        <dbReference type="ChEBI" id="CHEBI:18420"/>
        <note>shared with alpha subunit</note>
    </ligand>
</feature>
<feature type="binding site" evidence="1">
    <location>
        <position position="466"/>
    </location>
    <ligand>
        <name>Mg(2+)</name>
        <dbReference type="ChEBI" id="CHEBI:18420"/>
        <note>shared with alpha subunit</note>
    </ligand>
</feature>
<feature type="binding site" evidence="1">
    <location>
        <position position="467"/>
    </location>
    <ligand>
        <name>Mg(2+)</name>
        <dbReference type="ChEBI" id="CHEBI:18420"/>
        <note>shared with alpha subunit</note>
    </ligand>
</feature>
<name>SYFB_CHLMU</name>
<accession>Q9PJR8</accession>
<reference key="1">
    <citation type="journal article" date="2000" name="Nucleic Acids Res.">
        <title>Genome sequences of Chlamydia trachomatis MoPn and Chlamydia pneumoniae AR39.</title>
        <authorList>
            <person name="Read T.D."/>
            <person name="Brunham R.C."/>
            <person name="Shen C."/>
            <person name="Gill S.R."/>
            <person name="Heidelberg J.F."/>
            <person name="White O."/>
            <person name="Hickey E.K."/>
            <person name="Peterson J.D."/>
            <person name="Utterback T.R."/>
            <person name="Berry K.J."/>
            <person name="Bass S."/>
            <person name="Linher K.D."/>
            <person name="Weidman J.F."/>
            <person name="Khouri H.M."/>
            <person name="Craven B."/>
            <person name="Bowman C."/>
            <person name="Dodson R.J."/>
            <person name="Gwinn M.L."/>
            <person name="Nelson W.C."/>
            <person name="DeBoy R.T."/>
            <person name="Kolonay J.F."/>
            <person name="McClarty G."/>
            <person name="Salzberg S.L."/>
            <person name="Eisen J.A."/>
            <person name="Fraser C.M."/>
        </authorList>
    </citation>
    <scope>NUCLEOTIDE SEQUENCE [LARGE SCALE GENOMIC DNA]</scope>
    <source>
        <strain>MoPn / Nigg</strain>
    </source>
</reference>